<keyword id="KW-0037">Angiogenesis</keyword>
<keyword id="KW-0053">Apoptosis</keyword>
<keyword id="KW-0131">Cell cycle</keyword>
<keyword id="KW-1003">Cell membrane</keyword>
<keyword id="KW-0966">Cell projection</keyword>
<keyword id="KW-0175">Coiled coil</keyword>
<keyword id="KW-0963">Cytoplasm</keyword>
<keyword id="KW-0217">Developmental protein</keyword>
<keyword id="KW-0903">Direct protein sequencing</keyword>
<keyword id="KW-0341">Growth regulation</keyword>
<keyword id="KW-0343">GTPase activation</keyword>
<keyword id="KW-0472">Membrane</keyword>
<keyword id="KW-0597">Phosphoprotein</keyword>
<keyword id="KW-1185">Reference proteome</keyword>
<keyword id="KW-0346">Stress response</keyword>
<keyword id="KW-0043">Tumor suppressor</keyword>
<keyword id="KW-0834">Unfolded protein response</keyword>
<evidence type="ECO:0000250" key="1"/>
<evidence type="ECO:0000250" key="2">
    <source>
        <dbReference type="UniProtKB" id="Q5VWQ8"/>
    </source>
</evidence>
<evidence type="ECO:0000255" key="3"/>
<evidence type="ECO:0000255" key="4">
    <source>
        <dbReference type="PROSITE-ProRule" id="PRU00041"/>
    </source>
</evidence>
<evidence type="ECO:0000255" key="5">
    <source>
        <dbReference type="PROSITE-ProRule" id="PRU00167"/>
    </source>
</evidence>
<evidence type="ECO:0000256" key="6">
    <source>
        <dbReference type="SAM" id="MobiDB-lite"/>
    </source>
</evidence>
<evidence type="ECO:0000269" key="7">
    <source>
    </source>
</evidence>
<evidence type="ECO:0000305" key="8"/>
<evidence type="ECO:0007744" key="9">
    <source>
    </source>
</evidence>
<name>DAB2P_RAT</name>
<organism>
    <name type="scientific">Rattus norvegicus</name>
    <name type="common">Rat</name>
    <dbReference type="NCBI Taxonomy" id="10116"/>
    <lineage>
        <taxon>Eukaryota</taxon>
        <taxon>Metazoa</taxon>
        <taxon>Chordata</taxon>
        <taxon>Craniata</taxon>
        <taxon>Vertebrata</taxon>
        <taxon>Euteleostomi</taxon>
        <taxon>Mammalia</taxon>
        <taxon>Eutheria</taxon>
        <taxon>Euarchontoglires</taxon>
        <taxon>Glires</taxon>
        <taxon>Rodentia</taxon>
        <taxon>Myomorpha</taxon>
        <taxon>Muroidea</taxon>
        <taxon>Muridae</taxon>
        <taxon>Murinae</taxon>
        <taxon>Rattus</taxon>
    </lineage>
</organism>
<proteinExistence type="evidence at protein level"/>
<feature type="chain" id="PRO_0000252409" description="Disabled homolog 2-interacting protein">
    <location>
        <begin position="1"/>
        <end position="996"/>
    </location>
</feature>
<feature type="domain" description="C2" evidence="4">
    <location>
        <begin position="1"/>
        <end position="118"/>
    </location>
</feature>
<feature type="domain" description="Ras-GAP" evidence="5">
    <location>
        <begin position="194"/>
        <end position="402"/>
    </location>
</feature>
<feature type="region of interest" description="Necessary for interaction with AKT1" evidence="1">
    <location>
        <begin position="453"/>
        <end position="750"/>
    </location>
</feature>
<feature type="region of interest" description="Disordered" evidence="6">
    <location>
        <begin position="460"/>
        <end position="486"/>
    </location>
</feature>
<feature type="region of interest" description="Disordered" evidence="6">
    <location>
        <begin position="522"/>
        <end position="545"/>
    </location>
</feature>
<feature type="region of interest" description="Disordered" evidence="6">
    <location>
        <begin position="611"/>
        <end position="630"/>
    </location>
</feature>
<feature type="region of interest" description="Disordered" evidence="6">
    <location>
        <begin position="650"/>
        <end position="672"/>
    </location>
</feature>
<feature type="region of interest" description="Disordered" evidence="6">
    <location>
        <begin position="702"/>
        <end position="805"/>
    </location>
</feature>
<feature type="region of interest" description="Disordered" evidence="6">
    <location>
        <begin position="822"/>
        <end position="841"/>
    </location>
</feature>
<feature type="region of interest" description="Disordered" evidence="6">
    <location>
        <begin position="971"/>
        <end position="996"/>
    </location>
</feature>
<feature type="coiled-coil region" evidence="3">
    <location>
        <begin position="832"/>
        <end position="966"/>
    </location>
</feature>
<feature type="compositionally biased region" description="Polar residues" evidence="6">
    <location>
        <begin position="460"/>
        <end position="475"/>
    </location>
</feature>
<feature type="compositionally biased region" description="Low complexity" evidence="6">
    <location>
        <begin position="476"/>
        <end position="486"/>
    </location>
</feature>
<feature type="compositionally biased region" description="Polar residues" evidence="6">
    <location>
        <begin position="522"/>
        <end position="538"/>
    </location>
</feature>
<feature type="compositionally biased region" description="Low complexity" evidence="6">
    <location>
        <begin position="659"/>
        <end position="672"/>
    </location>
</feature>
<feature type="compositionally biased region" description="Pro residues" evidence="6">
    <location>
        <begin position="726"/>
        <end position="738"/>
    </location>
</feature>
<feature type="compositionally biased region" description="Polar residues" evidence="6">
    <location>
        <begin position="746"/>
        <end position="762"/>
    </location>
</feature>
<feature type="compositionally biased region" description="Polar residues" evidence="6">
    <location>
        <begin position="774"/>
        <end position="783"/>
    </location>
</feature>
<feature type="compositionally biased region" description="Basic and acidic residues" evidence="6">
    <location>
        <begin position="830"/>
        <end position="841"/>
    </location>
</feature>
<feature type="compositionally biased region" description="Polar residues" evidence="6">
    <location>
        <begin position="974"/>
        <end position="996"/>
    </location>
</feature>
<feature type="site" description="Arginine finger; crucial for GTP hydrolysis by stabilizing the transition state" evidence="5">
    <location>
        <position position="220"/>
    </location>
</feature>
<feature type="modified residue" description="Phosphoserine; by MAP3K5 and RIPK1" evidence="2">
    <location>
        <position position="535"/>
    </location>
</feature>
<feature type="modified residue" description="Phosphoserine" evidence="9">
    <location>
        <position position="554"/>
    </location>
</feature>
<feature type="modified residue" description="Phosphoserine" evidence="2">
    <location>
        <position position="785"/>
    </location>
</feature>
<feature type="modified residue" description="Phosphoserine" evidence="2">
    <location>
        <position position="802"/>
    </location>
</feature>
<feature type="mutagenesis site" description="Loss of GAP activity." evidence="7">
    <original>R</original>
    <variation>L</variation>
    <location>
        <position position="220"/>
    </location>
</feature>
<feature type="sequence conflict" description="In Ref. 1; AAK93947." evidence="8" ref="1">
    <original>A</original>
    <variation>G</variation>
    <location>
        <position position="228"/>
    </location>
</feature>
<feature type="sequence conflict" description="In Ref. 1; AAK93947." evidence="8" ref="1">
    <original>Q</original>
    <variation>H</variation>
    <location>
        <position position="238"/>
    </location>
</feature>
<feature type="sequence conflict" description="In Ref. 1; AAK93947." evidence="8" ref="1">
    <original>G</original>
    <variation>C</variation>
    <location>
        <position position="246"/>
    </location>
</feature>
<feature type="sequence conflict" description="In Ref. 1; AAK93947." evidence="8" ref="1">
    <original>A</original>
    <variation>T</variation>
    <location>
        <position position="487"/>
    </location>
</feature>
<reference key="1">
    <citation type="journal article" date="2002" name="J. Biol. Chem.">
        <title>The mechanism of growth-inhibitory effect of DOC-2/DAB2 in prostate cancer. Characterization of a novel GTPase-activating protein associated with N-terminal domain of DOC-2/DAB2.</title>
        <authorList>
            <person name="Wang Z."/>
            <person name="Tseng C.-P."/>
            <person name="Pong R.-C."/>
            <person name="Chen H."/>
            <person name="McConnell J.D."/>
            <person name="Navone N."/>
            <person name="Hsieh J.-T."/>
        </authorList>
    </citation>
    <scope>NUCLEOTIDE SEQUENCE [MRNA]</scope>
    <scope>PROTEIN SEQUENCE OF 977-996</scope>
    <scope>FUNCTION</scope>
    <scope>TISSUE SPECIFICITY</scope>
    <scope>INTERACTION WITH DAB1 AND DAB2</scope>
    <scope>MUTAGENESIS OF ARG-220</scope>
    <source>
        <tissue>Brain</tissue>
    </source>
</reference>
<reference key="2">
    <citation type="submission" date="2003-11" db="EMBL/GenBank/DDBJ databases">
        <authorList>
            <consortium name="NIH - Mammalian Gene Collection (MGC) project"/>
        </authorList>
    </citation>
    <scope>NUCLEOTIDE SEQUENCE [LARGE SCALE MRNA]</scope>
    <source>
        <tissue>Prostate</tissue>
    </source>
</reference>
<reference key="3">
    <citation type="journal article" date="2012" name="Nat. Commun.">
        <title>Quantitative maps of protein phosphorylation sites across 14 different rat organs and tissues.</title>
        <authorList>
            <person name="Lundby A."/>
            <person name="Secher A."/>
            <person name="Lage K."/>
            <person name="Nordsborg N.B."/>
            <person name="Dmytriyev A."/>
            <person name="Lundby C."/>
            <person name="Olsen J.V."/>
        </authorList>
    </citation>
    <scope>PHOSPHORYLATION [LARGE SCALE ANALYSIS] AT SER-554</scope>
    <scope>IDENTIFICATION BY MASS SPECTROMETRY [LARGE SCALE ANALYSIS]</scope>
</reference>
<comment type="function">
    <text evidence="1 7">Functions as a scaffold protein implicated in the regulation of a large spectrum of both general and specialized signaling pathways. Involved in several processes such as innate immune response, inflammation and cell growth inhibition, apoptosis, cell survival, angiogenesis, cell migration and maturation. Also plays a role in cell cycle checkpoint control; reduces G1 phase cyclin levels resulting in G0/G1 cell cycle arrest. Mediates signal transduction by receptor-mediated inflammatory signals, such as the tumor necrosis factor (TNF), interferon (IFN) or lipopolysaccharide (LPS). Modulates the balance between phosphatidylinositol 3-kinase (PI3K)-AKT-mediated cell survival and apoptosis stimulated kinase (MAP3K5)-JNK signaling pathways; sequesters both AKT1 and MAP3K5 and counterbalances the activity of each kinase by modulating their phosphorylation status in response to pro-inflammatory stimuli. Acts as a regulator of the endoplasmic reticulum (ER) unfolded protein response (UPR) pathway; specifically involved in transduction of the ER stress-response to the JNK cascade through ERN1. Mediates TNF-alpha-induced apoptosis activation by facilitating dissociation of inhibitor 14-3-3 from MAP3K5; recruits the PP2A phosphatase complex which dephosphorylates MAP3K5 on 'Ser-966', leading to the dissociation of 13-3-3 proteins and activation of the MAP3K5-JNK signaling pathway in endothelial cells. Acts a negative regulator in the IFN-gamma-mediated JAK-STAT signaling cascade by inhibiting smooth muscle cell (VSMCs) proliferation and intimal expansion, and thus, prevents graft arteriosclerosis (GA). Acts as a GTPase-activating protein (GAP) for the ADP ribosylation factor 6 (ARF6). Promotes hydrolysis of the ARF6-bound GTP and thus, negatively regulates phosphatidylinositol 4,5-bisphosphate (PIP2)-dependent TLR4-TIRAP-MyD88 and NF-kappa-B signaling pathways in endothelial cells in response to lipopolysaccharides (LPS). Binds specifically to phosphatidylinositol 4-phosphate (PtdIns4P) and phosphatidylinositol 3-phosphate (PtdIns3P). In response to vascular endothelial growth factor (VEGFA), acts as a negative regulator of the VEGFR2-PI3K-mediated angiogenic signaling pathway by inhibiting endothelial cell migration and tube formation. In the developing brain, promotes both the transition from the multipolar to the bipolar stage and the radial migration of cortical neurons from the ventricular zone toward the superficial layer of the neocortex in a glial-dependent locomotion process. Probable downstream effector of the Reelin signaling pathway; promotes Purkinje cell (PC) dendrites development and formation of cerebellar synapses. Also functions as a tumor suppressor protein in prostate cancer progression; prevents cell proliferation and epithelial-to-mesenchymal transition (EMT) through activation of the glycogen synthase kinase-3 beta (GSK3B)-induced beta-catenin and inhibition of PI3K-AKT and Ras-MAPK survival downstream signaling cascades, respectively (By similarity). Mediates TNF/TRAF2-induced MAP3K5-JNK activation, while it inhibits CHUK-NF-kappa-B signaling. Functions as a Ras GTPase-activating protein. May act as a tumor suppressor gene.</text>
</comment>
<comment type="subunit">
    <text evidence="2 7">On plasma membrane, exists in an inactive form complexed with TNFR1; in response to TNF-alpha, dissociates from TNFR1 complex, translocates to cytoplasm and forms part of an intracellular signaling complex comprising TRADD, RIPK1, TRAF2 and MAP3K5. Interacts (via NPXY motif) with DAB2 (via PID domain). Interacts (via PH domain) with ERN1. Part of a cytoplasmic complex made of HIPK1, DAB2IP and MAP3K5 in response to TNF-alpha; this complex formation promotes MAP3K5-JNK activation and subsequent apoptosis. Interacts (via N-terminal domain) with JAK2; the interaction occurs in a IFNG/IFN-gamma-dependent manner and inhibits JAK2 autophosphorylation activity. Interacts (via C2 domain) with GSK3B; the interaction stimulates GSK3B kinase activation. Interacts (via C2 domain) with PPP2CA. Interacts (via proline-rich motif) with a regulatory p85 subunit (via SH3 domain) of the PI3K complex; the interaction inhibits the PI3K-AKT complex activity in a TNF-alpha-dependent manner in prostate cancer (PCa) cells. Interacts with AKT1; the interaction is increased in a TNF-alpha-induced manner. Interacts (via C2 domain and active form preferentially) with KDR/VEGFR2 (tyrosine-phosphorylated active form preferentially); the interaction occurs at the late phase of VEGFA response and inhibits KDR/VEGFR2 activity. Interacts (via N-terminus C2 domain) with MAP3K5 ('Ser-966' dephosphorylated form preferentially); the interaction occurs in a TNF-alpha-induced manner. Interacts (via Ras-GAP domain) with the catalytic subunit of protein phosphatase PP2A; the interaction occurs in resting endothelial cells, is further enhanced by TNF-alpha stimulation and is required to bridge PP2A to MAP3K5. Interacts (via C-terminus PER domain) with TRAF2 (via zinc fingers); the interaction occurs in a TNF-alpha-dependent manner. Interacts with 14-3-3 proteins; the interaction occurs in a TNF-alpha-dependent manner. Interacts (via Ras-GAP domain) with RIPK1 (via kinase domain); the interaction occurs in a TNF-alpha-dependent manner (By similarity). Interacts with DAB1 and DAB2. Interacts with RAB40C; acts as a GAP for RAB40C (By similarity).</text>
</comment>
<comment type="subcellular location">
    <subcellularLocation>
        <location evidence="2">Cytoplasm</location>
    </subcellularLocation>
    <subcellularLocation>
        <location evidence="2">Cell membrane</location>
        <topology evidence="2">Peripheral membrane protein</topology>
    </subcellularLocation>
    <subcellularLocation>
        <location evidence="2">Membrane</location>
    </subcellularLocation>
    <subcellularLocation>
        <location evidence="1">Cell projection</location>
        <location evidence="1">Dendrite</location>
    </subcellularLocation>
    <text evidence="1 2">Localized in soma and dendrites of Purkinje cells as well as in scattered cell bodies in the molecular layer of the cerebellum. Colocalizes with TIRAP at the plasma membrane. Colocalizes with ARF6 at the plasma membrane and endocytic vesicles. Translocates from the plasma membrane to the cytoplasm in response to TNF-alpha. Phosphatidylinositol 4-phosphate (PtdIns4P) binding is essential for plasma membrane localization (By similarity). Localized in the cytoplasmic space in close proximity to lipid droplets (By similarity).</text>
</comment>
<comment type="tissue specificity">
    <text evidence="7">Expressed in brain, lung, thymus, bladder and skeletal muscle. Up-regulatedd during prostate degeneration.</text>
</comment>
<comment type="domain">
    <text evidence="1">Exists in a closed inactive form by an intramolecular interaction between the N- and the C-terminal domains. The proline-rich motif is critical both for PI3K-AKT activity inhibition and MAP3K5 activation. The PH and C2 domains are necessary for the binding to phosphatidylinositol phosphate. The Ras-GAP domain is necessary for its tumor-suppressive function. The C2 and Ras-GAP domains constitutively bind to MAP3K5 and facilitate the release of 14-3-3 proteins from MAP3K5. The PH and Ras-GAP domains, but not the NPXY motif, are crucial for its cell membrane localization and neuronal migration function. The PH domain is necessary but not sufficient to activate the JNK signaling pathway through ERN1 (By similarity).</text>
</comment>
<comment type="PTM">
    <text evidence="1">In response to TNF-alpha-induction, phosphorylated at Ser-535; phosphorylation leads to a conformational change, and thus, increases its association with 14-3-3 proteins, MAP3K5, RIPK1 and TRAF2 in endothelial cells; also stimulates regulatory p85 subunit sequestring and PI3K-p85 complex activity inhibition.</text>
</comment>
<gene>
    <name type="primary">Dab2ip</name>
</gene>
<sequence>MENLRRAVHPNKDNSRRVEHILKLWVIEAKDLPAKKKYLCELCLDDVLYARTTGKLKTDNVFWGEHFEFHNLPPLRTVTVHLYRETDKKKKKERNSYLGLVSLPAASVAGRQFVEKWYPVVTPNPKGGKGPGPMIRIKARYQTITILPMEMYKEFAEHITNHYLGLCAALEPILSAKTKEEMASALVHILQSTGKVKDFLTDLMMSEVDRCGDNEHLIFRENTLATKAIEEYLKLVGQKYLQDALGEFIKALYESDENCEVDPSKCSAADLPEHQGNLKMCCELAFCKIINSYCVFPRELKEVFASWRQECSSRGRPDISERLISASLFLRFLCPAIMSPSLFNLLQEYPDDRTARTLTLIAKVTQNLANFAKFGSKEEYMSFMNQFLEHEWTNMQRFLLEISNPETLSNTAGFEGYIDLGRELSSLHSLLWEAVSQLDQSIVSKLGPLPRILRDVHTALSTPGSGQLPGTNDLASTPGSGSSSVSAGLQKMVIENDLSGLIDFTRLPSPTPENKDLFFVTRSSGVQPSPARSSSYSEANEPDLQMANGSKSLSMVDLQDARTLDGEAGSPVGPEALPADGQVPATQLVAGWPARAAPVSLAGLATVRRAVPTPTTPGTSEGAPGRPQLLAPLSFQNPVYQMAAGLPLSPRGLGDSGSEGHSSLSSHSNSEELAAAAKLGSFSTAAEELARRPGELARRQMSLTEKGGQPTVPRQNSAGPQRRIDQPPPPPPPPPPAPRGRTPPTMLSTLQYPRPSSGTLASASPDWAGPGTRLRQQSSSSKGDSPELKPRALHKQGPSPVSPNALDRTAAWLLTMNAQLLEDEGLGPDPPHRDRLRSKEELSQAEKDLAVLQDKLRISTKKLEEYETLFKCQEETTQKLVLEYQARLEEGEERLRRQQEDKDVQMKGIISRLMSVEEELKKDHAEMQAAVDSKQKIIDAQEKRIASLDAANARLMSALTQLKERYSMRARNGVSPTNPTKLQITENGEFRNSSNC</sequence>
<protein>
    <recommendedName>
        <fullName>Disabled homolog 2-interacting protein</fullName>
        <shortName>DAB2-interacting protein</shortName>
    </recommendedName>
    <alternativeName>
        <fullName>ASK-interacting protein 1</fullName>
        <shortName>AIP-1</shortName>
    </alternativeName>
    <alternativeName>
        <fullName>DIP1/2</fullName>
    </alternativeName>
    <alternativeName>
        <fullName>DOC-2/DAB2 interactive protein</fullName>
    </alternativeName>
</protein>
<dbReference type="EMBL" id="BC061865">
    <property type="protein sequence ID" value="AAH61865.1"/>
    <property type="molecule type" value="mRNA"/>
</dbReference>
<dbReference type="EMBL" id="AF236130">
    <property type="protein sequence ID" value="AAK93947.1"/>
    <property type="molecule type" value="mRNA"/>
</dbReference>
<dbReference type="RefSeq" id="NP_619724.3">
    <property type="nucleotide sequence ID" value="NM_138710.3"/>
</dbReference>
<dbReference type="SMR" id="Q6P730"/>
<dbReference type="BioGRID" id="251329">
    <property type="interactions" value="1"/>
</dbReference>
<dbReference type="FunCoup" id="Q6P730">
    <property type="interactions" value="1227"/>
</dbReference>
<dbReference type="STRING" id="10116.ENSRNOP00000068688"/>
<dbReference type="GlyGen" id="Q6P730">
    <property type="glycosylation" value="1 site"/>
</dbReference>
<dbReference type="iPTMnet" id="Q6P730"/>
<dbReference type="PhosphoSitePlus" id="Q6P730"/>
<dbReference type="jPOST" id="Q6P730"/>
<dbReference type="PaxDb" id="10116-ENSRNOP00000056740"/>
<dbReference type="GeneID" id="192126"/>
<dbReference type="KEGG" id="rno:192126"/>
<dbReference type="UCSC" id="RGD:621686">
    <property type="organism name" value="rat"/>
</dbReference>
<dbReference type="AGR" id="RGD:621686"/>
<dbReference type="CTD" id="153090"/>
<dbReference type="RGD" id="621686">
    <property type="gene designation" value="Dab2ip"/>
</dbReference>
<dbReference type="VEuPathDB" id="HostDB:ENSRNOG00000055226"/>
<dbReference type="eggNOG" id="KOG3508">
    <property type="taxonomic scope" value="Eukaryota"/>
</dbReference>
<dbReference type="InParanoid" id="Q6P730"/>
<dbReference type="Reactome" id="R-RNO-5658442">
    <property type="pathway name" value="Regulation of RAS by GAPs"/>
</dbReference>
<dbReference type="PRO" id="PR:Q6P730"/>
<dbReference type="Proteomes" id="UP000002494">
    <property type="component" value="Chromosome 3"/>
</dbReference>
<dbReference type="Bgee" id="ENSRNOG00000055226">
    <property type="expression patterns" value="Expressed in skeletal muscle tissue and 19 other cell types or tissues"/>
</dbReference>
<dbReference type="ExpressionAtlas" id="Q6P730">
    <property type="expression patterns" value="baseline and differential"/>
</dbReference>
<dbReference type="GO" id="GO:1990597">
    <property type="term" value="C:AIP1-IRE1 complex"/>
    <property type="evidence" value="ECO:0000266"/>
    <property type="project" value="RGD"/>
</dbReference>
<dbReference type="GO" id="GO:0030424">
    <property type="term" value="C:axon"/>
    <property type="evidence" value="ECO:0000250"/>
    <property type="project" value="UniProtKB"/>
</dbReference>
<dbReference type="GO" id="GO:0044300">
    <property type="term" value="C:cerebellar mossy fiber"/>
    <property type="evidence" value="ECO:0000250"/>
    <property type="project" value="UniProtKB"/>
</dbReference>
<dbReference type="GO" id="GO:0044301">
    <property type="term" value="C:climbing fiber"/>
    <property type="evidence" value="ECO:0000250"/>
    <property type="project" value="UniProtKB"/>
</dbReference>
<dbReference type="GO" id="GO:0005737">
    <property type="term" value="C:cytoplasm"/>
    <property type="evidence" value="ECO:0000250"/>
    <property type="project" value="UniProtKB"/>
</dbReference>
<dbReference type="GO" id="GO:0030425">
    <property type="term" value="C:dendrite"/>
    <property type="evidence" value="ECO:0007669"/>
    <property type="project" value="UniProtKB-SubCell"/>
</dbReference>
<dbReference type="GO" id="GO:0030139">
    <property type="term" value="C:endocytic vesicle"/>
    <property type="evidence" value="ECO:0000250"/>
    <property type="project" value="UniProtKB"/>
</dbReference>
<dbReference type="GO" id="GO:0043025">
    <property type="term" value="C:neuronal cell body"/>
    <property type="evidence" value="ECO:0000250"/>
    <property type="project" value="UniProtKB"/>
</dbReference>
<dbReference type="GO" id="GO:0032809">
    <property type="term" value="C:neuronal cell body membrane"/>
    <property type="evidence" value="ECO:0000250"/>
    <property type="project" value="UniProtKB"/>
</dbReference>
<dbReference type="GO" id="GO:1990032">
    <property type="term" value="C:parallel fiber"/>
    <property type="evidence" value="ECO:0000250"/>
    <property type="project" value="UniProtKB"/>
</dbReference>
<dbReference type="GO" id="GO:0005886">
    <property type="term" value="C:plasma membrane"/>
    <property type="evidence" value="ECO:0000250"/>
    <property type="project" value="UniProtKB"/>
</dbReference>
<dbReference type="GO" id="GO:0071889">
    <property type="term" value="F:14-3-3 protein binding"/>
    <property type="evidence" value="ECO:0000266"/>
    <property type="project" value="RGD"/>
</dbReference>
<dbReference type="GO" id="GO:0005123">
    <property type="term" value="F:death receptor binding"/>
    <property type="evidence" value="ECO:0000266"/>
    <property type="project" value="RGD"/>
</dbReference>
<dbReference type="GO" id="GO:0005096">
    <property type="term" value="F:GTPase activator activity"/>
    <property type="evidence" value="ECO:0000314"/>
    <property type="project" value="RGD"/>
</dbReference>
<dbReference type="GO" id="GO:0042802">
    <property type="term" value="F:identical protein binding"/>
    <property type="evidence" value="ECO:0000266"/>
    <property type="project" value="RGD"/>
</dbReference>
<dbReference type="GO" id="GO:0019900">
    <property type="term" value="F:kinase binding"/>
    <property type="evidence" value="ECO:0000266"/>
    <property type="project" value="RGD"/>
</dbReference>
<dbReference type="GO" id="GO:0031434">
    <property type="term" value="F:mitogen-activated protein kinase kinase binding"/>
    <property type="evidence" value="ECO:0000266"/>
    <property type="project" value="RGD"/>
</dbReference>
<dbReference type="GO" id="GO:0031435">
    <property type="term" value="F:mitogen-activated protein kinase kinase kinase binding"/>
    <property type="evidence" value="ECO:0000266"/>
    <property type="project" value="RGD"/>
</dbReference>
<dbReference type="GO" id="GO:0043548">
    <property type="term" value="F:phosphatidylinositol 3-kinase binding"/>
    <property type="evidence" value="ECO:0000250"/>
    <property type="project" value="UniProtKB"/>
</dbReference>
<dbReference type="GO" id="GO:0036312">
    <property type="term" value="F:phosphatidylinositol 3-kinase regulatory subunit binding"/>
    <property type="evidence" value="ECO:0000250"/>
    <property type="project" value="UniProtKB"/>
</dbReference>
<dbReference type="GO" id="GO:0032266">
    <property type="term" value="F:phosphatidylinositol-3-phosphate binding"/>
    <property type="evidence" value="ECO:0000250"/>
    <property type="project" value="UniProtKB"/>
</dbReference>
<dbReference type="GO" id="GO:0070273">
    <property type="term" value="F:phosphatidylinositol-4-phosphate binding"/>
    <property type="evidence" value="ECO:0000250"/>
    <property type="project" value="UniProtKB"/>
</dbReference>
<dbReference type="GO" id="GO:0042803">
    <property type="term" value="F:protein homodimerization activity"/>
    <property type="evidence" value="ECO:0000266"/>
    <property type="project" value="RGD"/>
</dbReference>
<dbReference type="GO" id="GO:0019901">
    <property type="term" value="F:protein kinase binding"/>
    <property type="evidence" value="ECO:0000266"/>
    <property type="project" value="RGD"/>
</dbReference>
<dbReference type="GO" id="GO:0051721">
    <property type="term" value="F:protein phosphatase 2A binding"/>
    <property type="evidence" value="ECO:0000266"/>
    <property type="project" value="RGD"/>
</dbReference>
<dbReference type="GO" id="GO:0043539">
    <property type="term" value="F:protein serine/threonine kinase activator activity"/>
    <property type="evidence" value="ECO:0000250"/>
    <property type="project" value="UniProtKB"/>
</dbReference>
<dbReference type="GO" id="GO:0044877">
    <property type="term" value="F:protein-containing complex binding"/>
    <property type="evidence" value="ECO:0000250"/>
    <property type="project" value="UniProtKB"/>
</dbReference>
<dbReference type="GO" id="GO:0017124">
    <property type="term" value="F:SH3 domain binding"/>
    <property type="evidence" value="ECO:0000250"/>
    <property type="project" value="UniProtKB"/>
</dbReference>
<dbReference type="GO" id="GO:0035591">
    <property type="term" value="F:signaling adaptor activity"/>
    <property type="evidence" value="ECO:0000266"/>
    <property type="project" value="RGD"/>
</dbReference>
<dbReference type="GO" id="GO:0043184">
    <property type="term" value="F:vascular endothelial growth factor receptor 2 binding"/>
    <property type="evidence" value="ECO:0000266"/>
    <property type="project" value="RGD"/>
</dbReference>
<dbReference type="GO" id="GO:0001525">
    <property type="term" value="P:angiogenesis"/>
    <property type="evidence" value="ECO:0007669"/>
    <property type="project" value="UniProtKB-KW"/>
</dbReference>
<dbReference type="GO" id="GO:0021814">
    <property type="term" value="P:cell motility involved in cerebral cortex radial glia guided migration"/>
    <property type="evidence" value="ECO:0000250"/>
    <property type="project" value="UniProtKB"/>
</dbReference>
<dbReference type="GO" id="GO:0071364">
    <property type="term" value="P:cellular response to epidermal growth factor stimulus"/>
    <property type="evidence" value="ECO:0000314"/>
    <property type="project" value="BHF-UCL"/>
</dbReference>
<dbReference type="GO" id="GO:0071347">
    <property type="term" value="P:cellular response to interleukin-1"/>
    <property type="evidence" value="ECO:0000250"/>
    <property type="project" value="UniProtKB"/>
</dbReference>
<dbReference type="GO" id="GO:0071222">
    <property type="term" value="P:cellular response to lipopolysaccharide"/>
    <property type="evidence" value="ECO:0000250"/>
    <property type="project" value="UniProtKB"/>
</dbReference>
<dbReference type="GO" id="GO:0071356">
    <property type="term" value="P:cellular response to tumor necrosis factor"/>
    <property type="evidence" value="ECO:0000250"/>
    <property type="project" value="UniProtKB"/>
</dbReference>
<dbReference type="GO" id="GO:0035924">
    <property type="term" value="P:cellular response to vascular endothelial growth factor stimulus"/>
    <property type="evidence" value="ECO:0000250"/>
    <property type="project" value="UniProtKB"/>
</dbReference>
<dbReference type="GO" id="GO:0008625">
    <property type="term" value="P:extrinsic apoptotic signaling pathway via death domain receptors"/>
    <property type="evidence" value="ECO:0000266"/>
    <property type="project" value="RGD"/>
</dbReference>
<dbReference type="GO" id="GO:0035556">
    <property type="term" value="P:intracellular signal transduction"/>
    <property type="evidence" value="ECO:0000250"/>
    <property type="project" value="UniProtKB"/>
</dbReference>
<dbReference type="GO" id="GO:0070059">
    <property type="term" value="P:intrinsic apoptotic signaling pathway in response to endoplasmic reticulum stress"/>
    <property type="evidence" value="ECO:0000266"/>
    <property type="project" value="RGD"/>
</dbReference>
<dbReference type="GO" id="GO:0021819">
    <property type="term" value="P:layer formation in cerebral cortex"/>
    <property type="evidence" value="ECO:0000250"/>
    <property type="project" value="UniProtKB"/>
</dbReference>
<dbReference type="GO" id="GO:0016525">
    <property type="term" value="P:negative regulation of angiogenesis"/>
    <property type="evidence" value="ECO:0000250"/>
    <property type="project" value="UniProtKB"/>
</dbReference>
<dbReference type="GO" id="GO:0043124">
    <property type="term" value="P:negative regulation of canonical NF-kappaB signal transduction"/>
    <property type="evidence" value="ECO:0000250"/>
    <property type="project" value="UniProtKB"/>
</dbReference>
<dbReference type="GO" id="GO:0090090">
    <property type="term" value="P:negative regulation of canonical Wnt signaling pathway"/>
    <property type="evidence" value="ECO:0000266"/>
    <property type="project" value="RGD"/>
</dbReference>
<dbReference type="GO" id="GO:0030308">
    <property type="term" value="P:negative regulation of cell growth"/>
    <property type="evidence" value="ECO:0000314"/>
    <property type="project" value="RGD"/>
</dbReference>
<dbReference type="GO" id="GO:0008285">
    <property type="term" value="P:negative regulation of cell population proliferation"/>
    <property type="evidence" value="ECO:0000250"/>
    <property type="project" value="UniProtKB"/>
</dbReference>
<dbReference type="GO" id="GO:0045892">
    <property type="term" value="P:negative regulation of DNA-templated transcription"/>
    <property type="evidence" value="ECO:0000250"/>
    <property type="project" value="UniProtKB"/>
</dbReference>
<dbReference type="GO" id="GO:0010596">
    <property type="term" value="P:negative regulation of endothelial cell migration"/>
    <property type="evidence" value="ECO:0000250"/>
    <property type="project" value="UniProtKB"/>
</dbReference>
<dbReference type="GO" id="GO:0042059">
    <property type="term" value="P:negative regulation of epidermal growth factor receptor signaling pathway"/>
    <property type="evidence" value="ECO:0000314"/>
    <property type="project" value="BHF-UCL"/>
</dbReference>
<dbReference type="GO" id="GO:0010633">
    <property type="term" value="P:negative regulation of epithelial cell migration"/>
    <property type="evidence" value="ECO:0000250"/>
    <property type="project" value="UniProtKB"/>
</dbReference>
<dbReference type="GO" id="GO:0050680">
    <property type="term" value="P:negative regulation of epithelial cell proliferation"/>
    <property type="evidence" value="ECO:0000250"/>
    <property type="project" value="UniProtKB"/>
</dbReference>
<dbReference type="GO" id="GO:0010719">
    <property type="term" value="P:negative regulation of epithelial to mesenchymal transition"/>
    <property type="evidence" value="ECO:0000250"/>
    <property type="project" value="UniProtKB"/>
</dbReference>
<dbReference type="GO" id="GO:0070373">
    <property type="term" value="P:negative regulation of ERK1 and ERK2 cascade"/>
    <property type="evidence" value="ECO:0000250"/>
    <property type="project" value="UniProtKB"/>
</dbReference>
<dbReference type="GO" id="GO:0048147">
    <property type="term" value="P:negative regulation of fibroblast proliferation"/>
    <property type="evidence" value="ECO:0000250"/>
    <property type="project" value="UniProtKB"/>
</dbReference>
<dbReference type="GO" id="GO:0070317">
    <property type="term" value="P:negative regulation of G0 to G1 transition"/>
    <property type="evidence" value="ECO:0000250"/>
    <property type="project" value="UniProtKB"/>
</dbReference>
<dbReference type="GO" id="GO:0034260">
    <property type="term" value="P:negative regulation of GTPase activity"/>
    <property type="evidence" value="ECO:0000250"/>
    <property type="project" value="UniProtKB"/>
</dbReference>
<dbReference type="GO" id="GO:0043409">
    <property type="term" value="P:negative regulation of MAPK cascade"/>
    <property type="evidence" value="ECO:0000250"/>
    <property type="project" value="UniProtKB"/>
</dbReference>
<dbReference type="GO" id="GO:1901223">
    <property type="term" value="P:negative regulation of non-canonical NF-kappaB signal transduction"/>
    <property type="evidence" value="ECO:0000250"/>
    <property type="project" value="UniProtKB"/>
</dbReference>
<dbReference type="GO" id="GO:0051898">
    <property type="term" value="P:negative regulation of phosphatidylinositol 3-kinase/protein kinase B signal transduction"/>
    <property type="evidence" value="ECO:0000250"/>
    <property type="project" value="UniProtKB"/>
</dbReference>
<dbReference type="GO" id="GO:0042177">
    <property type="term" value="P:negative regulation of protein catabolic process"/>
    <property type="evidence" value="ECO:0000250"/>
    <property type="project" value="UniProtKB"/>
</dbReference>
<dbReference type="GO" id="GO:0046580">
    <property type="term" value="P:negative regulation of Ras protein signal transduction"/>
    <property type="evidence" value="ECO:0000314"/>
    <property type="project" value="RGD"/>
</dbReference>
<dbReference type="GO" id="GO:0034144">
    <property type="term" value="P:negative regulation of toll-like receptor 4 signaling pathway"/>
    <property type="evidence" value="ECO:0000250"/>
    <property type="project" value="UniProtKB"/>
</dbReference>
<dbReference type="GO" id="GO:0000122">
    <property type="term" value="P:negative regulation of transcription by RNA polymerase II"/>
    <property type="evidence" value="ECO:0000250"/>
    <property type="project" value="UniProtKB"/>
</dbReference>
<dbReference type="GO" id="GO:0030948">
    <property type="term" value="P:negative regulation of vascular endothelial growth factor receptor signaling pathway"/>
    <property type="evidence" value="ECO:0000250"/>
    <property type="project" value="UniProtKB"/>
</dbReference>
<dbReference type="GO" id="GO:1900747">
    <property type="term" value="P:negative regulation of vascular endothelial growth factor signaling pathway"/>
    <property type="evidence" value="ECO:0000250"/>
    <property type="project" value="UniProtKB"/>
</dbReference>
<dbReference type="GO" id="GO:0048812">
    <property type="term" value="P:neuron projection morphogenesis"/>
    <property type="evidence" value="ECO:0000250"/>
    <property type="project" value="UniProtKB"/>
</dbReference>
<dbReference type="GO" id="GO:0043065">
    <property type="term" value="P:positive regulation of apoptotic process"/>
    <property type="evidence" value="ECO:0000250"/>
    <property type="project" value="UniProtKB"/>
</dbReference>
<dbReference type="GO" id="GO:2001235">
    <property type="term" value="P:positive regulation of apoptotic signaling pathway"/>
    <property type="evidence" value="ECO:0000250"/>
    <property type="project" value="UniProtKB"/>
</dbReference>
<dbReference type="GO" id="GO:0043123">
    <property type="term" value="P:positive regulation of canonical NF-kappaB signal transduction"/>
    <property type="evidence" value="ECO:0000250"/>
    <property type="project" value="UniProtKB"/>
</dbReference>
<dbReference type="GO" id="GO:1900006">
    <property type="term" value="P:positive regulation of dendrite development"/>
    <property type="evidence" value="ECO:0000250"/>
    <property type="project" value="UniProtKB"/>
</dbReference>
<dbReference type="GO" id="GO:0050679">
    <property type="term" value="P:positive regulation of epithelial cell proliferation"/>
    <property type="evidence" value="ECO:0000250"/>
    <property type="project" value="UniProtKB"/>
</dbReference>
<dbReference type="GO" id="GO:0046330">
    <property type="term" value="P:positive regulation of JNK cascade"/>
    <property type="evidence" value="ECO:0000250"/>
    <property type="project" value="UniProtKB"/>
</dbReference>
<dbReference type="GO" id="GO:0043410">
    <property type="term" value="P:positive regulation of MAPK cascade"/>
    <property type="evidence" value="ECO:0000250"/>
    <property type="project" value="UniProtKB"/>
</dbReference>
<dbReference type="GO" id="GO:2001224">
    <property type="term" value="P:positive regulation of neuron migration"/>
    <property type="evidence" value="ECO:0000250"/>
    <property type="project" value="UniProtKB"/>
</dbReference>
<dbReference type="GO" id="GO:0010976">
    <property type="term" value="P:positive regulation of neuron projection development"/>
    <property type="evidence" value="ECO:0000250"/>
    <property type="project" value="UniProtKB"/>
</dbReference>
<dbReference type="GO" id="GO:1901800">
    <property type="term" value="P:positive regulation of proteasomal protein catabolic process"/>
    <property type="evidence" value="ECO:0000250"/>
    <property type="project" value="UniProtKB"/>
</dbReference>
<dbReference type="GO" id="GO:0045732">
    <property type="term" value="P:positive regulation of protein catabolic process"/>
    <property type="evidence" value="ECO:0000250"/>
    <property type="project" value="UniProtKB"/>
</dbReference>
<dbReference type="GO" id="GO:0031334">
    <property type="term" value="P:positive regulation of protein-containing complex assembly"/>
    <property type="evidence" value="ECO:0000266"/>
    <property type="project" value="RGD"/>
</dbReference>
<dbReference type="GO" id="GO:0090129">
    <property type="term" value="P:positive regulation of synapse maturation"/>
    <property type="evidence" value="ECO:0000250"/>
    <property type="project" value="UniProtKB"/>
</dbReference>
<dbReference type="GO" id="GO:0045944">
    <property type="term" value="P:positive regulation of transcription by RNA polymerase II"/>
    <property type="evidence" value="ECO:0000250"/>
    <property type="project" value="UniProtKB"/>
</dbReference>
<dbReference type="GO" id="GO:0030163">
    <property type="term" value="P:protein catabolic process"/>
    <property type="evidence" value="ECO:0000250"/>
    <property type="project" value="UniProtKB"/>
</dbReference>
<dbReference type="GO" id="GO:0043122">
    <property type="term" value="P:regulation of canonical NF-kappaB signal transduction"/>
    <property type="evidence" value="ECO:0000250"/>
    <property type="project" value="UniProtKB"/>
</dbReference>
<dbReference type="GO" id="GO:0051726">
    <property type="term" value="P:regulation of cell cycle"/>
    <property type="evidence" value="ECO:0000250"/>
    <property type="project" value="UniProtKB"/>
</dbReference>
<dbReference type="GO" id="GO:0043087">
    <property type="term" value="P:regulation of GTPase activity"/>
    <property type="evidence" value="ECO:0000250"/>
    <property type="project" value="UniProtKB"/>
</dbReference>
<dbReference type="GO" id="GO:1900744">
    <property type="term" value="P:regulation of p38MAPK cascade"/>
    <property type="evidence" value="ECO:0000250"/>
    <property type="project" value="UniProtKB"/>
</dbReference>
<dbReference type="GO" id="GO:0043254">
    <property type="term" value="P:regulation of protein-containing complex assembly"/>
    <property type="evidence" value="ECO:0000250"/>
    <property type="project" value="UniProtKB"/>
</dbReference>
<dbReference type="GO" id="GO:0006986">
    <property type="term" value="P:response to unfolded protein"/>
    <property type="evidence" value="ECO:0007669"/>
    <property type="project" value="UniProtKB-KW"/>
</dbReference>
<dbReference type="GO" id="GO:0035148">
    <property type="term" value="P:tube formation"/>
    <property type="evidence" value="ECO:0000250"/>
    <property type="project" value="UniProtKB"/>
</dbReference>
<dbReference type="GO" id="GO:0036324">
    <property type="term" value="P:vascular endothelial growth factor receptor-2 signaling pathway"/>
    <property type="evidence" value="ECO:0000250"/>
    <property type="project" value="UniProtKB"/>
</dbReference>
<dbReference type="CDD" id="cd04013">
    <property type="entry name" value="C2_SynGAP_like"/>
    <property type="match status" value="1"/>
</dbReference>
<dbReference type="CDD" id="cd05136">
    <property type="entry name" value="RasGAP_DAB2IP"/>
    <property type="match status" value="1"/>
</dbReference>
<dbReference type="FunFam" id="1.10.506.10:FF:000001">
    <property type="entry name" value="Ras GTPase-activating protein nGAP isoform 2"/>
    <property type="match status" value="1"/>
</dbReference>
<dbReference type="FunFam" id="2.60.40.150:FF:000010">
    <property type="entry name" value="Ras GTPase-activating protein nGAP isoform 2"/>
    <property type="match status" value="1"/>
</dbReference>
<dbReference type="Gene3D" id="2.60.40.150">
    <property type="entry name" value="C2 domain"/>
    <property type="match status" value="1"/>
</dbReference>
<dbReference type="Gene3D" id="1.10.506.10">
    <property type="entry name" value="GTPase Activation - p120gap, domain 1"/>
    <property type="match status" value="2"/>
</dbReference>
<dbReference type="InterPro" id="IPR000008">
    <property type="entry name" value="C2_dom"/>
</dbReference>
<dbReference type="InterPro" id="IPR035892">
    <property type="entry name" value="C2_domain_sf"/>
</dbReference>
<dbReference type="InterPro" id="IPR021887">
    <property type="entry name" value="DAB2P_C"/>
</dbReference>
<dbReference type="InterPro" id="IPR039360">
    <property type="entry name" value="Ras_GTPase"/>
</dbReference>
<dbReference type="InterPro" id="IPR023152">
    <property type="entry name" value="RasGAP_CS"/>
</dbReference>
<dbReference type="InterPro" id="IPR001936">
    <property type="entry name" value="RasGAP_dom"/>
</dbReference>
<dbReference type="InterPro" id="IPR008936">
    <property type="entry name" value="Rho_GTPase_activation_prot"/>
</dbReference>
<dbReference type="PANTHER" id="PTHR10194:SF26">
    <property type="entry name" value="DISABLED HOMOLOG 2-INTERACTING PROTEIN"/>
    <property type="match status" value="1"/>
</dbReference>
<dbReference type="PANTHER" id="PTHR10194">
    <property type="entry name" value="RAS GTPASE-ACTIVATING PROTEINS"/>
    <property type="match status" value="1"/>
</dbReference>
<dbReference type="Pfam" id="PF00168">
    <property type="entry name" value="C2"/>
    <property type="match status" value="1"/>
</dbReference>
<dbReference type="Pfam" id="PF12004">
    <property type="entry name" value="DAB2P_C"/>
    <property type="match status" value="1"/>
</dbReference>
<dbReference type="Pfam" id="PF00616">
    <property type="entry name" value="RasGAP"/>
    <property type="match status" value="2"/>
</dbReference>
<dbReference type="SMART" id="SM00239">
    <property type="entry name" value="C2"/>
    <property type="match status" value="1"/>
</dbReference>
<dbReference type="SMART" id="SM00323">
    <property type="entry name" value="RasGAP"/>
    <property type="match status" value="1"/>
</dbReference>
<dbReference type="SUPFAM" id="SSF49562">
    <property type="entry name" value="C2 domain (Calcium/lipid-binding domain, CaLB)"/>
    <property type="match status" value="1"/>
</dbReference>
<dbReference type="SUPFAM" id="SSF48350">
    <property type="entry name" value="GTPase activation domain, GAP"/>
    <property type="match status" value="1"/>
</dbReference>
<dbReference type="PROSITE" id="PS50004">
    <property type="entry name" value="C2"/>
    <property type="match status" value="1"/>
</dbReference>
<dbReference type="PROSITE" id="PS00509">
    <property type="entry name" value="RAS_GTPASE_ACTIV_1"/>
    <property type="match status" value="1"/>
</dbReference>
<dbReference type="PROSITE" id="PS50018">
    <property type="entry name" value="RAS_GTPASE_ACTIV_2"/>
    <property type="match status" value="1"/>
</dbReference>
<accession>Q6P730</accession>
<accession>Q924M9</accession>